<protein>
    <recommendedName>
        <fullName evidence="1">Capsid protein</fullName>
    </recommendedName>
    <alternativeName>
        <fullName evidence="1">Core antigen</fullName>
    </alternativeName>
    <alternativeName>
        <fullName evidence="1">Core protein</fullName>
    </alternativeName>
    <alternativeName>
        <fullName evidence="1">HBcAg</fullName>
    </alternativeName>
    <alternativeName>
        <fullName evidence="1">p21.5</fullName>
    </alternativeName>
</protein>
<comment type="function">
    <text evidence="1">Self assembles to form an icosahedral capsid. Most capsids appear to be large particles with an icosahedral symmetry of T=4 and consist of 240 copies of capsid protein, though a fraction forms smaller T=3 particles consisting of 180 capsid proteins. Entering capsids are transported along microtubules to the nucleus. Phosphorylation of the capsid is thought to induce exposure of nuclear localization signal in the C-terminal portion of the capsid protein that allows binding to the nuclear pore complex via the importin (karyopherin-) alpha and beta. Capsids are imported in intact form through the nuclear pore into the nuclear basket, where it probably binds NUP153. Only capsids that contain the mature viral genome can release the viral DNA and capsid protein into the nucleoplasm. Immature capsids get stuck in the basket. Capsids encapsulate the pre-genomic RNA and the P protein. Pre-genomic RNA is reverse-transcribed into DNA while the capsid is still in the cytoplasm. The capsid can then either be directed to the nucleus, providing more genomes for transcription, or bud through the endoplasmic reticulum to provide new virions.</text>
</comment>
<comment type="subunit">
    <text evidence="1">Homodimerizes, then multimerizes. Interacts with cytosol exposed regions of viral L glycoprotein present in the reticulum-to-Golgi compartment. Interacts with human FLNB. Phosphorylated form interacts with host importin alpha; this interaction depends on the exposure of the NLS, which itself depends upon genome maturation and/or phosphorylation of the capsid protein. Interacts with host NUP153.</text>
</comment>
<comment type="subcellular location">
    <subcellularLocation>
        <location evidence="1">Virion</location>
    </subcellularLocation>
    <subcellularLocation>
        <location evidence="1">Host cytoplasm</location>
    </subcellularLocation>
</comment>
<comment type="alternative products">
    <event type="alternative initiation"/>
    <isoform>
        <id>P0C6I8-1</id>
        <name>Capsid protein</name>
        <sequence type="displayed"/>
    </isoform>
    <isoform>
        <id>P89951-1</id>
        <name>External core antigen</name>
        <sequence type="external"/>
    </isoform>
</comment>
<comment type="PTM">
    <text evidence="1">Phosphorylated by host SRPK1, SRPK2, and maybe protein kinase C or GAPDH. Phosphorylation is critical for pregenomic RNA packaging. Protein kinase C phosphorylation is stimulated by HBx protein and may play a role in transport of the viral genome to the nucleus at the late step during the viral replication cycle.</text>
</comment>
<comment type="similarity">
    <text evidence="1">Belongs to the orthohepadnavirus core antigen family.</text>
</comment>
<gene>
    <name evidence="1" type="primary">C</name>
</gene>
<sequence length="183" mass="20932">MDIDPYKEFGASVELLSFLPSDFFPSVRDLLDTASALYREALESPEHCSPNHTALRQAVLCWGELMTGCSWVGNNLEDPASRELVVNYVNTNMGLKIRQLLWFHISCLTFGRETVLEYLVSFGVWIRTPPAYRPPNAPILSTLPETTVVRRRGRSPRRRTPSPRRRRSQSPRRRRSQSPASQC</sequence>
<organismHost>
    <name type="scientific">Hylobatidae</name>
    <name type="common">gibbons</name>
    <dbReference type="NCBI Taxonomy" id="9577"/>
</organismHost>
<feature type="chain" id="PRO_0000324378" description="Capsid protein">
    <location>
        <begin position="1"/>
        <end position="183"/>
    </location>
</feature>
<feature type="repeat" description="1; half-length">
    <location>
        <begin position="155"/>
        <end position="161"/>
    </location>
</feature>
<feature type="repeat" description="2">
    <location>
        <begin position="162"/>
        <end position="169"/>
    </location>
</feature>
<feature type="repeat" description="3">
    <location>
        <begin position="170"/>
        <end position="177"/>
    </location>
</feature>
<feature type="region of interest" description="Disordered" evidence="2">
    <location>
        <begin position="136"/>
        <end position="183"/>
    </location>
</feature>
<feature type="region of interest" description="3 X 8 AA repeats of S-P-R-R-R-[PR]-S-Q">
    <location>
        <begin position="155"/>
        <end position="177"/>
    </location>
</feature>
<feature type="region of interest" description="RNA binding" evidence="1">
    <location>
        <begin position="177"/>
        <end position="183"/>
    </location>
</feature>
<feature type="short sequence motif" description="Bipartite nuclear localization signal" evidence="1">
    <location>
        <begin position="158"/>
        <end position="175"/>
    </location>
</feature>
<feature type="compositionally biased region" description="Basic residues" evidence="2">
    <location>
        <begin position="149"/>
        <end position="176"/>
    </location>
</feature>
<feature type="modified residue" description="Phosphoserine; by host" evidence="1">
    <location>
        <position position="155"/>
    </location>
</feature>
<feature type="modified residue" description="Phosphoserine; by host" evidence="1">
    <location>
        <position position="162"/>
    </location>
</feature>
<feature type="modified residue" description="Phosphoserine; by host" evidence="1">
    <location>
        <position position="170"/>
    </location>
</feature>
<accession>P0C6I8</accession>
<evidence type="ECO:0000255" key="1">
    <source>
        <dbReference type="HAMAP-Rule" id="MF_04076"/>
    </source>
</evidence>
<evidence type="ECO:0000256" key="2">
    <source>
        <dbReference type="SAM" id="MobiDB-lite"/>
    </source>
</evidence>
<reference key="1">
    <citation type="journal article" date="1996" name="Virology">
        <title>Complete sequencing of a gibbon hepatitis B virus genome reveals a unique genotype distantly related to the chimpanzee hepatitis B virus.</title>
        <authorList>
            <person name="Norder H."/>
            <person name="Ebert J.W."/>
            <person name="Fields H.A."/>
            <person name="Mushahwar I.K."/>
            <person name="Magnius L.O."/>
        </authorList>
    </citation>
    <scope>NUCLEOTIDE SEQUENCE [GENOMIC DNA]</scope>
</reference>
<dbReference type="EMBL" id="U46935">
    <property type="status" value="NOT_ANNOTATED_CDS"/>
    <property type="molecule type" value="Genomic_DNA"/>
</dbReference>
<dbReference type="SMR" id="P0C6I8"/>
<dbReference type="Proteomes" id="UP000007408">
    <property type="component" value="Genome"/>
</dbReference>
<dbReference type="GO" id="GO:0043657">
    <property type="term" value="C:host cell"/>
    <property type="evidence" value="ECO:0007669"/>
    <property type="project" value="GOC"/>
</dbReference>
<dbReference type="GO" id="GO:0030430">
    <property type="term" value="C:host cell cytoplasm"/>
    <property type="evidence" value="ECO:0007669"/>
    <property type="project" value="UniProtKB-SubCell"/>
</dbReference>
<dbReference type="GO" id="GO:0039619">
    <property type="term" value="C:T=4 icosahedral viral capsid"/>
    <property type="evidence" value="ECO:0007669"/>
    <property type="project" value="UniProtKB-UniRule"/>
</dbReference>
<dbReference type="GO" id="GO:0003677">
    <property type="term" value="F:DNA binding"/>
    <property type="evidence" value="ECO:0007669"/>
    <property type="project" value="UniProtKB-UniRule"/>
</dbReference>
<dbReference type="GO" id="GO:0003723">
    <property type="term" value="F:RNA binding"/>
    <property type="evidence" value="ECO:0007669"/>
    <property type="project" value="UniProtKB-UniRule"/>
</dbReference>
<dbReference type="GO" id="GO:0005198">
    <property type="term" value="F:structural molecule activity"/>
    <property type="evidence" value="ECO:0007669"/>
    <property type="project" value="UniProtKB-UniRule"/>
</dbReference>
<dbReference type="GO" id="GO:0075521">
    <property type="term" value="P:microtubule-dependent intracellular transport of viral material towards nucleus"/>
    <property type="evidence" value="ECO:0007669"/>
    <property type="project" value="UniProtKB-UniRule"/>
</dbReference>
<dbReference type="GO" id="GO:0046718">
    <property type="term" value="P:symbiont entry into host cell"/>
    <property type="evidence" value="ECO:0007669"/>
    <property type="project" value="UniProtKB-UniRule"/>
</dbReference>
<dbReference type="GO" id="GO:0075732">
    <property type="term" value="P:viral penetration into host nucleus"/>
    <property type="evidence" value="ECO:0007669"/>
    <property type="project" value="UniProtKB-UniRule"/>
</dbReference>
<dbReference type="FunFam" id="1.10.4090.10:FF:000001">
    <property type="entry name" value="Capsid protein"/>
    <property type="match status" value="1"/>
</dbReference>
<dbReference type="Gene3D" id="1.10.4090.10">
    <property type="entry name" value="Viral capsid, core domain supefamily, Hepatitis B virus"/>
    <property type="match status" value="1"/>
</dbReference>
<dbReference type="HAMAP" id="MF_04076">
    <property type="entry name" value="HBV_HBEAG"/>
    <property type="match status" value="1"/>
</dbReference>
<dbReference type="InterPro" id="IPR002006">
    <property type="entry name" value="Hepatitis_core"/>
</dbReference>
<dbReference type="InterPro" id="IPR036459">
    <property type="entry name" value="Viral_capsid_core_dom_sf_HBV"/>
</dbReference>
<dbReference type="Pfam" id="PF00906">
    <property type="entry name" value="Hepatitis_core"/>
    <property type="match status" value="3"/>
</dbReference>
<dbReference type="SUPFAM" id="SSF47852">
    <property type="entry name" value="Hepatitis B viral capsid (hbcag)"/>
    <property type="match status" value="1"/>
</dbReference>
<keyword id="KW-0024">Alternative initiation</keyword>
<keyword id="KW-0167">Capsid protein</keyword>
<keyword id="KW-1176">Cytoplasmic inwards viral transport</keyword>
<keyword id="KW-0238">DNA-binding</keyword>
<keyword id="KW-1035">Host cytoplasm</keyword>
<keyword id="KW-0945">Host-virus interaction</keyword>
<keyword id="KW-1177">Microtubular inwards viral transport</keyword>
<keyword id="KW-0597">Phosphoprotein</keyword>
<keyword id="KW-0677">Repeat</keyword>
<keyword id="KW-0694">RNA-binding</keyword>
<keyword id="KW-1144">T=4 icosahedral capsid protein</keyword>
<keyword id="KW-1163">Viral penetration into host nucleus</keyword>
<keyword id="KW-0946">Virion</keyword>
<keyword id="KW-1160">Virus entry into host cell</keyword>
<name>CAPSD_HBVGB</name>
<organism>
    <name type="scientific">Gibbon hepatitis B virus subtype ayw3q (isolate Hope)</name>
    <name type="common">HBVgbn</name>
    <dbReference type="NCBI Taxonomy" id="489544"/>
    <lineage>
        <taxon>Viruses</taxon>
        <taxon>Riboviria</taxon>
        <taxon>Pararnavirae</taxon>
        <taxon>Artverviricota</taxon>
        <taxon>Revtraviricetes</taxon>
        <taxon>Blubervirales</taxon>
        <taxon>Hepadnaviridae</taxon>
        <taxon>Orthohepadnavirus</taxon>
        <taxon>Hepatitis B virus</taxon>
    </lineage>
</organism>
<proteinExistence type="inferred from homology"/>